<name>TSGA_YERPP</name>
<gene>
    <name evidence="1" type="primary">tsgA</name>
    <name type="ordered locus">YPDSF_0090</name>
</gene>
<keyword id="KW-0997">Cell inner membrane</keyword>
<keyword id="KW-1003">Cell membrane</keyword>
<keyword id="KW-0472">Membrane</keyword>
<keyword id="KW-0812">Transmembrane</keyword>
<keyword id="KW-1133">Transmembrane helix</keyword>
<feature type="chain" id="PRO_1000064260" description="Protein TsgA homolog">
    <location>
        <begin position="1"/>
        <end position="394"/>
    </location>
</feature>
<feature type="transmembrane region" description="Helical" evidence="1">
    <location>
        <begin position="11"/>
        <end position="31"/>
    </location>
</feature>
<feature type="transmembrane region" description="Helical" evidence="1">
    <location>
        <begin position="51"/>
        <end position="71"/>
    </location>
</feature>
<feature type="transmembrane region" description="Helical" evidence="1">
    <location>
        <begin position="76"/>
        <end position="96"/>
    </location>
</feature>
<feature type="transmembrane region" description="Helical" evidence="1">
    <location>
        <begin position="101"/>
        <end position="121"/>
    </location>
</feature>
<feature type="transmembrane region" description="Helical" evidence="1">
    <location>
        <begin position="134"/>
        <end position="154"/>
    </location>
</feature>
<feature type="transmembrane region" description="Helical" evidence="1">
    <location>
        <begin position="162"/>
        <end position="182"/>
    </location>
</feature>
<feature type="transmembrane region" description="Helical" evidence="1">
    <location>
        <begin position="206"/>
        <end position="226"/>
    </location>
</feature>
<feature type="transmembrane region" description="Helical" evidence="1">
    <location>
        <begin position="246"/>
        <end position="266"/>
    </location>
</feature>
<feature type="transmembrane region" description="Helical" evidence="1">
    <location>
        <begin position="274"/>
        <end position="294"/>
    </location>
</feature>
<feature type="transmembrane region" description="Helical" evidence="1">
    <location>
        <begin position="302"/>
        <end position="322"/>
    </location>
</feature>
<feature type="transmembrane region" description="Helical" evidence="1">
    <location>
        <begin position="334"/>
        <end position="354"/>
    </location>
</feature>
<feature type="transmembrane region" description="Helical" evidence="1">
    <location>
        <begin position="363"/>
        <end position="383"/>
    </location>
</feature>
<accession>A4TGV3</accession>
<organism>
    <name type="scientific">Yersinia pestis (strain Pestoides F)</name>
    <dbReference type="NCBI Taxonomy" id="386656"/>
    <lineage>
        <taxon>Bacteria</taxon>
        <taxon>Pseudomonadati</taxon>
        <taxon>Pseudomonadota</taxon>
        <taxon>Gammaproteobacteria</taxon>
        <taxon>Enterobacterales</taxon>
        <taxon>Yersiniaceae</taxon>
        <taxon>Yersinia</taxon>
    </lineage>
</organism>
<sequence length="394" mass="43653">MNNSNRIRLTWISYLSYALTGALVIVTGIVMGNIAEYFNLPIASMSNTFTFLNAGILISIFLNAWLMEIIPLKRQLVFGFILMLIAIAGLMVGHNLMIFSISMFIFGVVSGITMSIGTFLVTHMYEGRQRGSRLLFTDSFFSMAGMIFPIAAAMLLARHIEWYWVYACIGLLYVGIFVLTLCSEFPVLGHKATDQSKPVVKEKWGVGVLFLAIAALCYILGQLGFIQWVPEYATKTFNMNISQAGQLVSNFWISYMIGMWIFSFILRFFDLQRIVTVLAAMATLAMYLFVSTDNPAYLSYYILALGFVSSAIYTTLITLGSLQTKVSSPKLVNFILTCGTVGTMLTFVVTGPIVANNGVHAALETANGLYLAVFILCLALGFFTKHRSHGHVTH</sequence>
<reference key="1">
    <citation type="submission" date="2007-02" db="EMBL/GenBank/DDBJ databases">
        <title>Complete sequence of chromosome of Yersinia pestis Pestoides F.</title>
        <authorList>
            <consortium name="US DOE Joint Genome Institute"/>
            <person name="Copeland A."/>
            <person name="Lucas S."/>
            <person name="Lapidus A."/>
            <person name="Barry K."/>
            <person name="Detter J.C."/>
            <person name="Glavina del Rio T."/>
            <person name="Hammon N."/>
            <person name="Israni S."/>
            <person name="Dalin E."/>
            <person name="Tice H."/>
            <person name="Pitluck S."/>
            <person name="Di Bartolo G."/>
            <person name="Chain P."/>
            <person name="Malfatti S."/>
            <person name="Shin M."/>
            <person name="Vergez L."/>
            <person name="Schmutz J."/>
            <person name="Larimer F."/>
            <person name="Land M."/>
            <person name="Hauser L."/>
            <person name="Worsham P."/>
            <person name="Chu M."/>
            <person name="Bearden S."/>
            <person name="Garcia E."/>
            <person name="Richardson P."/>
        </authorList>
    </citation>
    <scope>NUCLEOTIDE SEQUENCE [LARGE SCALE GENOMIC DNA]</scope>
    <source>
        <strain>Pestoides F</strain>
    </source>
</reference>
<protein>
    <recommendedName>
        <fullName evidence="1">Protein TsgA homolog</fullName>
    </recommendedName>
</protein>
<proteinExistence type="inferred from homology"/>
<evidence type="ECO:0000255" key="1">
    <source>
        <dbReference type="HAMAP-Rule" id="MF_01044"/>
    </source>
</evidence>
<dbReference type="EMBL" id="CP000668">
    <property type="protein sequence ID" value="ABP38516.1"/>
    <property type="molecule type" value="Genomic_DNA"/>
</dbReference>
<dbReference type="RefSeq" id="WP_002215690.1">
    <property type="nucleotide sequence ID" value="NZ_CP009715.1"/>
</dbReference>
<dbReference type="SMR" id="A4TGV3"/>
<dbReference type="GeneID" id="57974438"/>
<dbReference type="KEGG" id="ypp:YPDSF_0090"/>
<dbReference type="PATRIC" id="fig|386656.14.peg.477"/>
<dbReference type="GO" id="GO:0005886">
    <property type="term" value="C:plasma membrane"/>
    <property type="evidence" value="ECO:0007669"/>
    <property type="project" value="UniProtKB-SubCell"/>
</dbReference>
<dbReference type="GO" id="GO:0022857">
    <property type="term" value="F:transmembrane transporter activity"/>
    <property type="evidence" value="ECO:0007669"/>
    <property type="project" value="InterPro"/>
</dbReference>
<dbReference type="Gene3D" id="1.20.1250.20">
    <property type="entry name" value="MFS general substrate transporter like domains"/>
    <property type="match status" value="2"/>
</dbReference>
<dbReference type="HAMAP" id="MF_01044">
    <property type="entry name" value="MFS_TsgA"/>
    <property type="match status" value="1"/>
</dbReference>
<dbReference type="InterPro" id="IPR011701">
    <property type="entry name" value="MFS"/>
</dbReference>
<dbReference type="InterPro" id="IPR020846">
    <property type="entry name" value="MFS_dom"/>
</dbReference>
<dbReference type="InterPro" id="IPR036259">
    <property type="entry name" value="MFS_trans_sf"/>
</dbReference>
<dbReference type="InterPro" id="IPR023528">
    <property type="entry name" value="MFS_TsgA"/>
</dbReference>
<dbReference type="InterPro" id="IPR050375">
    <property type="entry name" value="MFS_TsgA-like"/>
</dbReference>
<dbReference type="NCBIfam" id="NF002982">
    <property type="entry name" value="PRK03699.1"/>
    <property type="match status" value="1"/>
</dbReference>
<dbReference type="PANTHER" id="PTHR43702">
    <property type="entry name" value="L-FUCOSE-PROTON SYMPORTER"/>
    <property type="match status" value="1"/>
</dbReference>
<dbReference type="PANTHER" id="PTHR43702:SF3">
    <property type="entry name" value="PROTEIN TSGA"/>
    <property type="match status" value="1"/>
</dbReference>
<dbReference type="Pfam" id="PF07690">
    <property type="entry name" value="MFS_1"/>
    <property type="match status" value="1"/>
</dbReference>
<dbReference type="SUPFAM" id="SSF103473">
    <property type="entry name" value="MFS general substrate transporter"/>
    <property type="match status" value="1"/>
</dbReference>
<dbReference type="PROSITE" id="PS50850">
    <property type="entry name" value="MFS"/>
    <property type="match status" value="1"/>
</dbReference>
<comment type="subcellular location">
    <subcellularLocation>
        <location evidence="1">Cell inner membrane</location>
        <topology evidence="1">Multi-pass membrane protein</topology>
    </subcellularLocation>
</comment>
<comment type="similarity">
    <text evidence="1">Belongs to the major facilitator superfamily. TsgA family.</text>
</comment>